<evidence type="ECO:0000255" key="1"/>
<gene>
    <name type="primary">tcpR</name>
    <name type="ordered locus">VC0395_A0357</name>
    <name type="ordered locus">VC395_0848</name>
</gene>
<sequence length="151" mass="17764">MTSIWLHESDFRYVNLDVERYQKKYRLTLTNGNKYVFIKDKEDISDVNPFIPYILMEEGMNNVLVKSDDYKDILIYQGVNIQCLDFLNDNDISVEKLVDFETVELKADELNKIKARRLDAQLIEDEVKNNKVFIIGFIAIVIISIGVFWLM</sequence>
<reference key="1">
    <citation type="journal article" date="2001" name="Infect. Immun.">
        <title>Comparison of Vibrio cholerae pathogenicity islands in sixth and seventh pandemic strains.</title>
        <authorList>
            <person name="Karaolis D.K.R."/>
            <person name="Lan R."/>
            <person name="Kaper J.B."/>
            <person name="Reeves P.R."/>
        </authorList>
    </citation>
    <scope>NUCLEOTIDE SEQUENCE [GENOMIC DNA]</scope>
</reference>
<reference key="2">
    <citation type="submission" date="2007-03" db="EMBL/GenBank/DDBJ databases">
        <authorList>
            <person name="Heidelberg J."/>
        </authorList>
    </citation>
    <scope>NUCLEOTIDE SEQUENCE [LARGE SCALE GENOMIC DNA]</scope>
    <source>
        <strain>ATCC 39541 / Classical Ogawa 395 / O395</strain>
    </source>
</reference>
<reference key="3">
    <citation type="journal article" date="2008" name="PLoS ONE">
        <title>A recalibrated molecular clock and independent origins for the cholera pandemic clones.</title>
        <authorList>
            <person name="Feng L."/>
            <person name="Reeves P.R."/>
            <person name="Lan R."/>
            <person name="Ren Y."/>
            <person name="Gao C."/>
            <person name="Zhou Z."/>
            <person name="Ren Y."/>
            <person name="Cheng J."/>
            <person name="Wang W."/>
            <person name="Wang J."/>
            <person name="Qian W."/>
            <person name="Li D."/>
            <person name="Wang L."/>
        </authorList>
    </citation>
    <scope>NUCLEOTIDE SEQUENCE [LARGE SCALE GENOMIC DNA]</scope>
    <source>
        <strain>ATCC 39541 / Classical Ogawa 395 / O395</strain>
    </source>
</reference>
<organism>
    <name type="scientific">Vibrio cholerae serotype O1 (strain ATCC 39541 / Classical Ogawa 395 / O395)</name>
    <dbReference type="NCBI Taxonomy" id="345073"/>
    <lineage>
        <taxon>Bacteria</taxon>
        <taxon>Pseudomonadati</taxon>
        <taxon>Pseudomonadota</taxon>
        <taxon>Gammaproteobacteria</taxon>
        <taxon>Vibrionales</taxon>
        <taxon>Vibrionaceae</taxon>
        <taxon>Vibrio</taxon>
    </lineage>
</organism>
<feature type="chain" id="PRO_0000321858" description="Toxin coregulated pilus biosynthesis protein R">
    <location>
        <begin position="1"/>
        <end position="151"/>
    </location>
</feature>
<feature type="transmembrane region" description="Helical" evidence="1">
    <location>
        <begin position="132"/>
        <end position="151"/>
    </location>
</feature>
<dbReference type="EMBL" id="AF325733">
    <property type="protein sequence ID" value="AAK20759.1"/>
    <property type="molecule type" value="Genomic_DNA"/>
</dbReference>
<dbReference type="EMBL" id="CP000627">
    <property type="protein sequence ID" value="ABQ21416.1"/>
    <property type="molecule type" value="Genomic_DNA"/>
</dbReference>
<dbReference type="EMBL" id="CP001235">
    <property type="protein sequence ID" value="ACP08863.1"/>
    <property type="molecule type" value="Genomic_DNA"/>
</dbReference>
<dbReference type="RefSeq" id="WP_000200904.1">
    <property type="nucleotide sequence ID" value="NZ_JAACZH010000023.1"/>
</dbReference>
<dbReference type="SMR" id="A5F396"/>
<dbReference type="KEGG" id="vco:VC0395_A0357"/>
<dbReference type="KEGG" id="vcr:VC395_0848"/>
<dbReference type="PATRIC" id="fig|345073.21.peg.820"/>
<dbReference type="HOGENOM" id="CLU_1730654_0_0_6"/>
<dbReference type="OrthoDB" id="9880212at2"/>
<dbReference type="Proteomes" id="UP000000249">
    <property type="component" value="Chromosome 2"/>
</dbReference>
<dbReference type="GO" id="GO:0005886">
    <property type="term" value="C:plasma membrane"/>
    <property type="evidence" value="ECO:0007669"/>
    <property type="project" value="UniProtKB-SubCell"/>
</dbReference>
<protein>
    <recommendedName>
        <fullName>Toxin coregulated pilus biosynthesis protein R</fullName>
    </recommendedName>
    <alternativeName>
        <fullName>TCP pilus biosynthesis protein TcpR</fullName>
    </alternativeName>
</protein>
<name>TCPR_VIBC3</name>
<proteinExistence type="predicted"/>
<accession>A5F396</accession>
<accession>C3LYJ7</accession>
<accession>P29483</accession>
<accession>Q9JQ07</accession>
<keyword id="KW-1003">Cell membrane</keyword>
<keyword id="KW-0472">Membrane</keyword>
<keyword id="KW-0812">Transmembrane</keyword>
<keyword id="KW-1133">Transmembrane helix</keyword>
<comment type="function">
    <text>Involved in TCP pilus biogenesis.</text>
</comment>
<comment type="subcellular location">
    <subcellularLocation>
        <location>Cell membrane</location>
        <topology>Single-pass membrane protein</topology>
    </subcellularLocation>
</comment>